<proteinExistence type="inferred from homology"/>
<keyword id="KW-0030">Aminoacyl-tRNA synthetase</keyword>
<keyword id="KW-0067">ATP-binding</keyword>
<keyword id="KW-0963">Cytoplasm</keyword>
<keyword id="KW-0436">Ligase</keyword>
<keyword id="KW-0547">Nucleotide-binding</keyword>
<keyword id="KW-0648">Protein biosynthesis</keyword>
<sequence>MSELLLELFSEEIPAFIQKDAEEGYLSIFTKIFEENEIFAKIQVFSGPRRITLYATHLPKVTLPKEIEIKGPSTEAPEAAINGFCKAHNVSKLELSTKLINNQLYYFYIKKVEERQIKEILPEIIVEAINKYSWAKSMFWGNYNIKWIRPLRNILCIFDSEILPLQFGHLAANNVTFGHRLTDNKKLEVTDFEDYKTKLTENYVILERLKREEIIKTSLLEQANSHNLTIKEDLRLIEEVAGLSEFPVVLCGAIPQKFLELPKEVLISSMRTHQKYFCLFDRSENFAPYFLFVSNGQFANSKLVVQGNEKVLSARLSDALYFYKQDISKTLEANLEKLAAVTFHTKLGSLKEKVERITNICKYIDPDNKDLITAAKLCKSDLVSEMVGEFPELQGIMGYYYAKHENLNEEIAVAIRDHYKPQGLSDSVPVGNAALLAIADKLDSLVGLMIAGEAPTGSGDPYALRRQVLGIIRIIIENKLELNLNSLIDFSLKLYSSDKDKDLIISFFEERAKFYFKNEYDISLINAVLDLNLANIKFKLDALKEFLEKEDGKQLLNAYKRASNILGSQNIDGAVEPSLFNTQPEKELFEVTQKLSLQIVDKDYDKALNLLQTLLTPITSFFDNVLVNDSDPKIAKNRLLILQDVCKLFHKIAKFNRL</sequence>
<comment type="catalytic activity">
    <reaction evidence="1">
        <text>tRNA(Gly) + glycine + ATP = glycyl-tRNA(Gly) + AMP + diphosphate</text>
        <dbReference type="Rhea" id="RHEA:16013"/>
        <dbReference type="Rhea" id="RHEA-COMP:9664"/>
        <dbReference type="Rhea" id="RHEA-COMP:9683"/>
        <dbReference type="ChEBI" id="CHEBI:30616"/>
        <dbReference type="ChEBI" id="CHEBI:33019"/>
        <dbReference type="ChEBI" id="CHEBI:57305"/>
        <dbReference type="ChEBI" id="CHEBI:78442"/>
        <dbReference type="ChEBI" id="CHEBI:78522"/>
        <dbReference type="ChEBI" id="CHEBI:456215"/>
        <dbReference type="EC" id="6.1.1.14"/>
    </reaction>
</comment>
<comment type="subunit">
    <text evidence="1">Tetramer of two alpha and two beta subunits.</text>
</comment>
<comment type="subcellular location">
    <subcellularLocation>
        <location evidence="1">Cytoplasm</location>
    </subcellularLocation>
</comment>
<comment type="similarity">
    <text evidence="1">Belongs to the class-II aminoacyl-tRNA synthetase family.</text>
</comment>
<evidence type="ECO:0000255" key="1">
    <source>
        <dbReference type="HAMAP-Rule" id="MF_00255"/>
    </source>
</evidence>
<feature type="chain" id="PRO_0000274897" description="Glycine--tRNA ligase beta subunit">
    <location>
        <begin position="1"/>
        <end position="658"/>
    </location>
</feature>
<accession>Q1RGS4</accession>
<name>SYGB_RICBR</name>
<reference key="1">
    <citation type="journal article" date="2006" name="PLoS Genet.">
        <title>Genome sequence of Rickettsia bellii illuminates the role of amoebae in gene exchanges between intracellular pathogens.</title>
        <authorList>
            <person name="Ogata H."/>
            <person name="La Scola B."/>
            <person name="Audic S."/>
            <person name="Renesto P."/>
            <person name="Blanc G."/>
            <person name="Robert C."/>
            <person name="Fournier P.-E."/>
            <person name="Claverie J.-M."/>
            <person name="Raoult D."/>
        </authorList>
    </citation>
    <scope>NUCLEOTIDE SEQUENCE [LARGE SCALE GENOMIC DNA]</scope>
    <source>
        <strain>RML369-C</strain>
    </source>
</reference>
<gene>
    <name evidence="1" type="primary">glyS</name>
    <name type="ordered locus">RBE_1359</name>
</gene>
<organism>
    <name type="scientific">Rickettsia bellii (strain RML369-C)</name>
    <dbReference type="NCBI Taxonomy" id="336407"/>
    <lineage>
        <taxon>Bacteria</taxon>
        <taxon>Pseudomonadati</taxon>
        <taxon>Pseudomonadota</taxon>
        <taxon>Alphaproteobacteria</taxon>
        <taxon>Rickettsiales</taxon>
        <taxon>Rickettsiaceae</taxon>
        <taxon>Rickettsieae</taxon>
        <taxon>Rickettsia</taxon>
        <taxon>belli group</taxon>
    </lineage>
</organism>
<dbReference type="EC" id="6.1.1.14" evidence="1"/>
<dbReference type="EMBL" id="CP000087">
    <property type="protein sequence ID" value="ABE05440.1"/>
    <property type="molecule type" value="Genomic_DNA"/>
</dbReference>
<dbReference type="RefSeq" id="WP_011478009.1">
    <property type="nucleotide sequence ID" value="NC_007940.1"/>
</dbReference>
<dbReference type="SMR" id="Q1RGS4"/>
<dbReference type="KEGG" id="rbe:RBE_1359"/>
<dbReference type="eggNOG" id="COG0751">
    <property type="taxonomic scope" value="Bacteria"/>
</dbReference>
<dbReference type="HOGENOM" id="CLU_007220_2_1_5"/>
<dbReference type="OrthoDB" id="9775440at2"/>
<dbReference type="Proteomes" id="UP000001951">
    <property type="component" value="Chromosome"/>
</dbReference>
<dbReference type="GO" id="GO:0005829">
    <property type="term" value="C:cytosol"/>
    <property type="evidence" value="ECO:0007669"/>
    <property type="project" value="TreeGrafter"/>
</dbReference>
<dbReference type="GO" id="GO:0004814">
    <property type="term" value="F:arginine-tRNA ligase activity"/>
    <property type="evidence" value="ECO:0007669"/>
    <property type="project" value="InterPro"/>
</dbReference>
<dbReference type="GO" id="GO:0005524">
    <property type="term" value="F:ATP binding"/>
    <property type="evidence" value="ECO:0007669"/>
    <property type="project" value="UniProtKB-UniRule"/>
</dbReference>
<dbReference type="GO" id="GO:0004820">
    <property type="term" value="F:glycine-tRNA ligase activity"/>
    <property type="evidence" value="ECO:0007669"/>
    <property type="project" value="UniProtKB-UniRule"/>
</dbReference>
<dbReference type="GO" id="GO:0006420">
    <property type="term" value="P:arginyl-tRNA aminoacylation"/>
    <property type="evidence" value="ECO:0007669"/>
    <property type="project" value="InterPro"/>
</dbReference>
<dbReference type="GO" id="GO:0006426">
    <property type="term" value="P:glycyl-tRNA aminoacylation"/>
    <property type="evidence" value="ECO:0007669"/>
    <property type="project" value="UniProtKB-UniRule"/>
</dbReference>
<dbReference type="HAMAP" id="MF_00255">
    <property type="entry name" value="Gly_tRNA_synth_beta"/>
    <property type="match status" value="1"/>
</dbReference>
<dbReference type="InterPro" id="IPR008909">
    <property type="entry name" value="DALR_anticod-bd"/>
</dbReference>
<dbReference type="InterPro" id="IPR015944">
    <property type="entry name" value="Gly-tRNA-synth_bsu"/>
</dbReference>
<dbReference type="InterPro" id="IPR006194">
    <property type="entry name" value="Gly-tRNA-synth_heterodimer"/>
</dbReference>
<dbReference type="NCBIfam" id="TIGR00211">
    <property type="entry name" value="glyS"/>
    <property type="match status" value="1"/>
</dbReference>
<dbReference type="PANTHER" id="PTHR30075:SF2">
    <property type="entry name" value="GLYCINE--TRNA LIGASE, CHLOROPLASTIC_MITOCHONDRIAL 2"/>
    <property type="match status" value="1"/>
</dbReference>
<dbReference type="PANTHER" id="PTHR30075">
    <property type="entry name" value="GLYCYL-TRNA SYNTHETASE"/>
    <property type="match status" value="1"/>
</dbReference>
<dbReference type="Pfam" id="PF05746">
    <property type="entry name" value="DALR_1"/>
    <property type="match status" value="1"/>
</dbReference>
<dbReference type="Pfam" id="PF02092">
    <property type="entry name" value="tRNA_synt_2f"/>
    <property type="match status" value="1"/>
</dbReference>
<dbReference type="PRINTS" id="PR01045">
    <property type="entry name" value="TRNASYNTHGB"/>
</dbReference>
<dbReference type="SUPFAM" id="SSF109604">
    <property type="entry name" value="HD-domain/PDEase-like"/>
    <property type="match status" value="1"/>
</dbReference>
<dbReference type="PROSITE" id="PS50861">
    <property type="entry name" value="AA_TRNA_LIGASE_II_GLYAB"/>
    <property type="match status" value="1"/>
</dbReference>
<protein>
    <recommendedName>
        <fullName evidence="1">Glycine--tRNA ligase beta subunit</fullName>
        <ecNumber evidence="1">6.1.1.14</ecNumber>
    </recommendedName>
    <alternativeName>
        <fullName evidence="1">Glycyl-tRNA synthetase beta subunit</fullName>
        <shortName evidence="1">GlyRS</shortName>
    </alternativeName>
</protein>